<protein>
    <recommendedName>
        <fullName evidence="4">Large ribosomal subunit protein P2y</fullName>
    </recommendedName>
    <alternativeName>
        <fullName>60S acidic ribosomal protein P2-2</fullName>
    </alternativeName>
</protein>
<keyword id="KW-0025">Alternative splicing</keyword>
<keyword id="KW-0597">Phosphoprotein</keyword>
<keyword id="KW-1185">Reference proteome</keyword>
<keyword id="KW-0687">Ribonucleoprotein</keyword>
<keyword id="KW-0689">Ribosomal protein</keyword>
<sequence length="115" mass="11444">MKVVAAYLLAVLSGKASPTSADIKTILGSVGAETEDSQIELLLKEVKGKDLAELIAAGREKLASVPSGGGGGVAVASATSGGGGGGGASAAESKKEEKKEEKEESDDDMGFSLFE</sequence>
<dbReference type="EMBL" id="AC005824">
    <property type="protein sequence ID" value="AAC73029.1"/>
    <property type="molecule type" value="Genomic_DNA"/>
</dbReference>
<dbReference type="EMBL" id="CP002685">
    <property type="protein sequence ID" value="AEC08029.1"/>
    <property type="molecule type" value="Genomic_DNA"/>
</dbReference>
<dbReference type="EMBL" id="CP002685">
    <property type="protein sequence ID" value="AEC08030.1"/>
    <property type="molecule type" value="Genomic_DNA"/>
</dbReference>
<dbReference type="EMBL" id="CP002685">
    <property type="protein sequence ID" value="AEC08031.1"/>
    <property type="molecule type" value="Genomic_DNA"/>
</dbReference>
<dbReference type="EMBL" id="AF428429">
    <property type="protein sequence ID" value="AAL16198.1"/>
    <property type="molecule type" value="mRNA"/>
</dbReference>
<dbReference type="EMBL" id="AY062854">
    <property type="protein sequence ID" value="AAL32932.1"/>
    <property type="molecule type" value="mRNA"/>
</dbReference>
<dbReference type="EMBL" id="BT006518">
    <property type="protein sequence ID" value="AAP21326.1"/>
    <property type="molecule type" value="mRNA"/>
</dbReference>
<dbReference type="EMBL" id="AY087501">
    <property type="protein sequence ID" value="AAM65044.1"/>
    <property type="molecule type" value="mRNA"/>
</dbReference>
<dbReference type="PIR" id="A84676">
    <property type="entry name" value="A84676"/>
</dbReference>
<dbReference type="RefSeq" id="NP_180339.1">
    <molecule id="Q9SLF7-1"/>
    <property type="nucleotide sequence ID" value="NM_128330.4"/>
</dbReference>
<dbReference type="RefSeq" id="NP_850106.1">
    <molecule id="Q9SLF7-1"/>
    <property type="nucleotide sequence ID" value="NM_179775.2"/>
</dbReference>
<dbReference type="RefSeq" id="NP_973549.1">
    <molecule id="Q9SLF7-1"/>
    <property type="nucleotide sequence ID" value="NM_201820.1"/>
</dbReference>
<dbReference type="BioGRID" id="2667">
    <property type="interactions" value="46"/>
</dbReference>
<dbReference type="FunCoup" id="Q9SLF7">
    <property type="interactions" value="2324"/>
</dbReference>
<dbReference type="STRING" id="3702.Q9SLF7"/>
<dbReference type="iPTMnet" id="Q9SLF7"/>
<dbReference type="PaxDb" id="3702-AT2G27710.1"/>
<dbReference type="ProteomicsDB" id="228127">
    <molecule id="Q9SLF7-1"/>
</dbReference>
<dbReference type="EnsemblPlants" id="AT2G27710.1">
    <molecule id="Q9SLF7-1"/>
    <property type="protein sequence ID" value="AT2G27710.1"/>
    <property type="gene ID" value="AT2G27710"/>
</dbReference>
<dbReference type="EnsemblPlants" id="AT2G27710.2">
    <molecule id="Q9SLF7-1"/>
    <property type="protein sequence ID" value="AT2G27710.2"/>
    <property type="gene ID" value="AT2G27710"/>
</dbReference>
<dbReference type="EnsemblPlants" id="AT2G27710.3">
    <molecule id="Q9SLF7-1"/>
    <property type="protein sequence ID" value="AT2G27710.3"/>
    <property type="gene ID" value="AT2G27710"/>
</dbReference>
<dbReference type="GeneID" id="817317"/>
<dbReference type="Gramene" id="AT2G27710.1">
    <molecule id="Q9SLF7-1"/>
    <property type="protein sequence ID" value="AT2G27710.1"/>
    <property type="gene ID" value="AT2G27710"/>
</dbReference>
<dbReference type="Gramene" id="AT2G27710.2">
    <molecule id="Q9SLF7-1"/>
    <property type="protein sequence ID" value="AT2G27710.2"/>
    <property type="gene ID" value="AT2G27710"/>
</dbReference>
<dbReference type="Gramene" id="AT2G27710.3">
    <molecule id="Q9SLF7-1"/>
    <property type="protein sequence ID" value="AT2G27710.3"/>
    <property type="gene ID" value="AT2G27710"/>
</dbReference>
<dbReference type="KEGG" id="ath:AT2G27710"/>
<dbReference type="Araport" id="AT2G27710"/>
<dbReference type="TAIR" id="AT2G27710"/>
<dbReference type="eggNOG" id="KOG3449">
    <property type="taxonomic scope" value="Eukaryota"/>
</dbReference>
<dbReference type="HOGENOM" id="CLU_114656_0_0_1"/>
<dbReference type="InParanoid" id="Q9SLF7"/>
<dbReference type="OMA" id="MKVIASY"/>
<dbReference type="PhylomeDB" id="Q9SLF7"/>
<dbReference type="CD-CODE" id="4299E36E">
    <property type="entry name" value="Nucleolus"/>
</dbReference>
<dbReference type="PRO" id="PR:Q9SLF7"/>
<dbReference type="Proteomes" id="UP000006548">
    <property type="component" value="Chromosome 2"/>
</dbReference>
<dbReference type="ExpressionAtlas" id="Q9SLF7">
    <property type="expression patterns" value="baseline and differential"/>
</dbReference>
<dbReference type="GO" id="GO:0009507">
    <property type="term" value="C:chloroplast"/>
    <property type="evidence" value="ECO:0007005"/>
    <property type="project" value="TAIR"/>
</dbReference>
<dbReference type="GO" id="GO:0022625">
    <property type="term" value="C:cytosolic large ribosomal subunit"/>
    <property type="evidence" value="ECO:0007669"/>
    <property type="project" value="InterPro"/>
</dbReference>
<dbReference type="GO" id="GO:0022626">
    <property type="term" value="C:cytosolic ribosome"/>
    <property type="evidence" value="ECO:0007005"/>
    <property type="project" value="TAIR"/>
</dbReference>
<dbReference type="GO" id="GO:0005730">
    <property type="term" value="C:nucleolus"/>
    <property type="evidence" value="ECO:0007005"/>
    <property type="project" value="TAIR"/>
</dbReference>
<dbReference type="GO" id="GO:0005777">
    <property type="term" value="C:peroxisome"/>
    <property type="evidence" value="ECO:0007005"/>
    <property type="project" value="TAIR"/>
</dbReference>
<dbReference type="GO" id="GO:0099503">
    <property type="term" value="C:secretory vesicle"/>
    <property type="evidence" value="ECO:0007005"/>
    <property type="project" value="TAIR"/>
</dbReference>
<dbReference type="GO" id="GO:0003729">
    <property type="term" value="F:mRNA binding"/>
    <property type="evidence" value="ECO:0000314"/>
    <property type="project" value="TAIR"/>
</dbReference>
<dbReference type="GO" id="GO:0003735">
    <property type="term" value="F:structural constituent of ribosome"/>
    <property type="evidence" value="ECO:0000314"/>
    <property type="project" value="CAFA"/>
</dbReference>
<dbReference type="GO" id="GO:0002182">
    <property type="term" value="P:cytoplasmic translational elongation"/>
    <property type="evidence" value="ECO:0007669"/>
    <property type="project" value="InterPro"/>
</dbReference>
<dbReference type="GO" id="GO:0009409">
    <property type="term" value="P:response to cold"/>
    <property type="evidence" value="ECO:0000270"/>
    <property type="project" value="TAIR"/>
</dbReference>
<dbReference type="CDD" id="cd05833">
    <property type="entry name" value="Ribosomal_P2"/>
    <property type="match status" value="1"/>
</dbReference>
<dbReference type="FunFam" id="1.10.10.1410:FF:000002">
    <property type="entry name" value="60S acidic ribosomal protein P2"/>
    <property type="match status" value="1"/>
</dbReference>
<dbReference type="Gene3D" id="1.10.10.1410">
    <property type="match status" value="1"/>
</dbReference>
<dbReference type="HAMAP" id="MF_01478">
    <property type="entry name" value="Ribosomal_L12_arch"/>
    <property type="match status" value="1"/>
</dbReference>
<dbReference type="InterPro" id="IPR038716">
    <property type="entry name" value="P1/P2_N_sf"/>
</dbReference>
<dbReference type="InterPro" id="IPR027534">
    <property type="entry name" value="Ribosomal_P1/P2"/>
</dbReference>
<dbReference type="InterPro" id="IPR044076">
    <property type="entry name" value="Ribosomal_P2"/>
</dbReference>
<dbReference type="PANTHER" id="PTHR21141">
    <property type="entry name" value="60S ACIDIC RIBOSOMAL PROTEIN FAMILY MEMBER"/>
    <property type="match status" value="1"/>
</dbReference>
<dbReference type="PANTHER" id="PTHR21141:SF5">
    <property type="entry name" value="LARGE RIBOSOMAL SUBUNIT PROTEIN P2"/>
    <property type="match status" value="1"/>
</dbReference>
<dbReference type="Pfam" id="PF00428">
    <property type="entry name" value="Ribosomal_60s"/>
    <property type="match status" value="1"/>
</dbReference>
<comment type="function">
    <text>Plays an important role in the elongation step of protein synthesis.</text>
</comment>
<comment type="subunit">
    <text>P1 and P2 exist as dimers at the large ribosomal subunit.</text>
</comment>
<comment type="alternative products">
    <event type="alternative splicing"/>
    <isoform>
        <id>Q9SLF7-1</id>
        <name>1</name>
        <sequence type="displayed"/>
    </isoform>
    <text>A number of isoforms are produced. According to EST sequences.</text>
</comment>
<comment type="PTM">
    <text evidence="1">Phosphorylated.</text>
</comment>
<comment type="similarity">
    <text evidence="5">Belongs to the eukaryotic ribosomal protein P1/P2 family.</text>
</comment>
<feature type="chain" id="PRO_0000157659" description="Large ribosomal subunit protein P2y">
    <location>
        <begin position="1"/>
        <end position="115"/>
    </location>
</feature>
<feature type="region of interest" description="Disordered" evidence="3">
    <location>
        <begin position="63"/>
        <end position="115"/>
    </location>
</feature>
<feature type="compositionally biased region" description="Basic and acidic residues" evidence="3">
    <location>
        <begin position="92"/>
        <end position="102"/>
    </location>
</feature>
<feature type="modified residue" description="Phosphoserine" evidence="2">
    <location>
        <position position="105"/>
    </location>
</feature>
<feature type="sequence conflict" description="In Ref. 4; AAM65044." evidence="5" ref="4">
    <original>K</original>
    <variation>N</variation>
    <location>
        <position position="61"/>
    </location>
</feature>
<feature type="sequence conflict" description="In Ref. 4; AAM65044." evidence="5" ref="4">
    <original>S</original>
    <variation>P</variation>
    <location>
        <position position="89"/>
    </location>
</feature>
<proteinExistence type="evidence at protein level"/>
<reference key="1">
    <citation type="journal article" date="1999" name="Nature">
        <title>Sequence and analysis of chromosome 2 of the plant Arabidopsis thaliana.</title>
        <authorList>
            <person name="Lin X."/>
            <person name="Kaul S."/>
            <person name="Rounsley S.D."/>
            <person name="Shea T.P."/>
            <person name="Benito M.-I."/>
            <person name="Town C.D."/>
            <person name="Fujii C.Y."/>
            <person name="Mason T.M."/>
            <person name="Bowman C.L."/>
            <person name="Barnstead M.E."/>
            <person name="Feldblyum T.V."/>
            <person name="Buell C.R."/>
            <person name="Ketchum K.A."/>
            <person name="Lee J.J."/>
            <person name="Ronning C.M."/>
            <person name="Koo H.L."/>
            <person name="Moffat K.S."/>
            <person name="Cronin L.A."/>
            <person name="Shen M."/>
            <person name="Pai G."/>
            <person name="Van Aken S."/>
            <person name="Umayam L."/>
            <person name="Tallon L.J."/>
            <person name="Gill J.E."/>
            <person name="Adams M.D."/>
            <person name="Carrera A.J."/>
            <person name="Creasy T.H."/>
            <person name="Goodman H.M."/>
            <person name="Somerville C.R."/>
            <person name="Copenhaver G.P."/>
            <person name="Preuss D."/>
            <person name="Nierman W.C."/>
            <person name="White O."/>
            <person name="Eisen J.A."/>
            <person name="Salzberg S.L."/>
            <person name="Fraser C.M."/>
            <person name="Venter J.C."/>
        </authorList>
    </citation>
    <scope>NUCLEOTIDE SEQUENCE [LARGE SCALE GENOMIC DNA]</scope>
    <source>
        <strain>cv. Columbia</strain>
    </source>
</reference>
<reference key="2">
    <citation type="journal article" date="2017" name="Plant J.">
        <title>Araport11: a complete reannotation of the Arabidopsis thaliana reference genome.</title>
        <authorList>
            <person name="Cheng C.Y."/>
            <person name="Krishnakumar V."/>
            <person name="Chan A.P."/>
            <person name="Thibaud-Nissen F."/>
            <person name="Schobel S."/>
            <person name="Town C.D."/>
        </authorList>
    </citation>
    <scope>GENOME REANNOTATION</scope>
    <source>
        <strain>cv. Columbia</strain>
    </source>
</reference>
<reference key="3">
    <citation type="journal article" date="2003" name="Science">
        <title>Empirical analysis of transcriptional activity in the Arabidopsis genome.</title>
        <authorList>
            <person name="Yamada K."/>
            <person name="Lim J."/>
            <person name="Dale J.M."/>
            <person name="Chen H."/>
            <person name="Shinn P."/>
            <person name="Palm C.J."/>
            <person name="Southwick A.M."/>
            <person name="Wu H.C."/>
            <person name="Kim C.J."/>
            <person name="Nguyen M."/>
            <person name="Pham P.K."/>
            <person name="Cheuk R.F."/>
            <person name="Karlin-Newmann G."/>
            <person name="Liu S.X."/>
            <person name="Lam B."/>
            <person name="Sakano H."/>
            <person name="Wu T."/>
            <person name="Yu G."/>
            <person name="Miranda M."/>
            <person name="Quach H.L."/>
            <person name="Tripp M."/>
            <person name="Chang C.H."/>
            <person name="Lee J.M."/>
            <person name="Toriumi M.J."/>
            <person name="Chan M.M."/>
            <person name="Tang C.C."/>
            <person name="Onodera C.S."/>
            <person name="Deng J.M."/>
            <person name="Akiyama K."/>
            <person name="Ansari Y."/>
            <person name="Arakawa T."/>
            <person name="Banh J."/>
            <person name="Banno F."/>
            <person name="Bowser L."/>
            <person name="Brooks S.Y."/>
            <person name="Carninci P."/>
            <person name="Chao Q."/>
            <person name="Choy N."/>
            <person name="Enju A."/>
            <person name="Goldsmith A.D."/>
            <person name="Gurjal M."/>
            <person name="Hansen N.F."/>
            <person name="Hayashizaki Y."/>
            <person name="Johnson-Hopson C."/>
            <person name="Hsuan V.W."/>
            <person name="Iida K."/>
            <person name="Karnes M."/>
            <person name="Khan S."/>
            <person name="Koesema E."/>
            <person name="Ishida J."/>
            <person name="Jiang P.X."/>
            <person name="Jones T."/>
            <person name="Kawai J."/>
            <person name="Kamiya A."/>
            <person name="Meyers C."/>
            <person name="Nakajima M."/>
            <person name="Narusaka M."/>
            <person name="Seki M."/>
            <person name="Sakurai T."/>
            <person name="Satou M."/>
            <person name="Tamse R."/>
            <person name="Vaysberg M."/>
            <person name="Wallender E.K."/>
            <person name="Wong C."/>
            <person name="Yamamura Y."/>
            <person name="Yuan S."/>
            <person name="Shinozaki K."/>
            <person name="Davis R.W."/>
            <person name="Theologis A."/>
            <person name="Ecker J.R."/>
        </authorList>
    </citation>
    <scope>NUCLEOTIDE SEQUENCE [LARGE SCALE MRNA]</scope>
    <source>
        <strain>cv. Columbia</strain>
    </source>
</reference>
<reference key="4">
    <citation type="submission" date="2002-03" db="EMBL/GenBank/DDBJ databases">
        <title>Full-length cDNA from Arabidopsis thaliana.</title>
        <authorList>
            <person name="Brover V.V."/>
            <person name="Troukhan M.E."/>
            <person name="Alexandrov N.A."/>
            <person name="Lu Y.-P."/>
            <person name="Flavell R.B."/>
            <person name="Feldmann K.A."/>
        </authorList>
    </citation>
    <scope>NUCLEOTIDE SEQUENCE [LARGE SCALE MRNA]</scope>
</reference>
<reference key="5">
    <citation type="journal article" date="2001" name="Plant Physiol.">
        <title>The organization of cytoplasmic ribosomal protein genes in the Arabidopsis genome.</title>
        <authorList>
            <person name="Barakat A."/>
            <person name="Szick-Miranda K."/>
            <person name="Chang I.-F."/>
            <person name="Guyot R."/>
            <person name="Blanc G."/>
            <person name="Cooke R."/>
            <person name="Delseny M."/>
            <person name="Bailey-Serres J."/>
        </authorList>
    </citation>
    <scope>GENE FAMILY ORGANIZATION</scope>
    <scope>NOMENCLATURE</scope>
</reference>
<reference key="6">
    <citation type="journal article" date="2009" name="Plant Physiol.">
        <title>Large-scale Arabidopsis phosphoproteome profiling reveals novel chloroplast kinase substrates and phosphorylation networks.</title>
        <authorList>
            <person name="Reiland S."/>
            <person name="Messerli G."/>
            <person name="Baerenfaller K."/>
            <person name="Gerrits B."/>
            <person name="Endler A."/>
            <person name="Grossmann J."/>
            <person name="Gruissem W."/>
            <person name="Baginsky S."/>
        </authorList>
    </citation>
    <scope>IDENTIFICATION BY MASS SPECTROMETRY [LARGE SCALE ANALYSIS]</scope>
</reference>
<reference key="7">
    <citation type="journal article" date="2023" name="Plant Cell">
        <title>An updated nomenclature for plant ribosomal protein genes.</title>
        <authorList>
            <person name="Scarpin M.R."/>
            <person name="Busche M."/>
            <person name="Martinez R.E."/>
            <person name="Harper L.C."/>
            <person name="Reiser L."/>
            <person name="Szakonyi D."/>
            <person name="Merchante C."/>
            <person name="Lan T."/>
            <person name="Xiong W."/>
            <person name="Mo B."/>
            <person name="Tang G."/>
            <person name="Chen X."/>
            <person name="Bailey-Serres J."/>
            <person name="Browning K.S."/>
            <person name="Brunkard J.O."/>
        </authorList>
    </citation>
    <scope>NOMENCLATURE</scope>
</reference>
<organism>
    <name type="scientific">Arabidopsis thaliana</name>
    <name type="common">Mouse-ear cress</name>
    <dbReference type="NCBI Taxonomy" id="3702"/>
    <lineage>
        <taxon>Eukaryota</taxon>
        <taxon>Viridiplantae</taxon>
        <taxon>Streptophyta</taxon>
        <taxon>Embryophyta</taxon>
        <taxon>Tracheophyta</taxon>
        <taxon>Spermatophyta</taxon>
        <taxon>Magnoliopsida</taxon>
        <taxon>eudicotyledons</taxon>
        <taxon>Gunneridae</taxon>
        <taxon>Pentapetalae</taxon>
        <taxon>rosids</taxon>
        <taxon>malvids</taxon>
        <taxon>Brassicales</taxon>
        <taxon>Brassicaceae</taxon>
        <taxon>Camelineae</taxon>
        <taxon>Arabidopsis</taxon>
    </lineage>
</organism>
<gene>
    <name type="primary">RPP2B</name>
    <name type="ordered locus">At2g27710</name>
    <name type="ORF">F15K20.19</name>
</gene>
<accession>Q9SLF7</accession>
<accession>Q8LB03</accession>
<evidence type="ECO:0000250" key="1"/>
<evidence type="ECO:0000250" key="2">
    <source>
        <dbReference type="UniProtKB" id="Q9LH85"/>
    </source>
</evidence>
<evidence type="ECO:0000256" key="3">
    <source>
        <dbReference type="SAM" id="MobiDB-lite"/>
    </source>
</evidence>
<evidence type="ECO:0000303" key="4">
    <source>
    </source>
</evidence>
<evidence type="ECO:0000305" key="5"/>
<name>RLA22_ARATH</name>